<sequence length="366" mass="40259">MTPTTTPVSNPDALAPGTQDVHTLKGTLQRLAPGTPLRDSLDRIVRGHTGALIVIGDDENVTSICDGGFEFDVPFAATRLRELCKMDGAVILSSDIERIKRANVQLLPSPTWPTQESGTRHRSAERTALHTGVPVIAVSESQNTITLYVEGKAHMLEQPSTLLNRANQALGTMERYRDRLDQVNNRLHLAELHSYVTVIDVVSVIQREEMLRRVGEIIDGDVLELGKDAKQIQIQLSELRGDNDRERESIIADYLVTDGIPADEEIYAALEAISHLDDKALLKPANIARILGLPPTEEALDEPVAPRGYRTLNRIPRVQKFLMDKLIVEFGNLDALLNASVEDLSAVDGVGSLWARHITDGLGRLS</sequence>
<proteinExistence type="inferred from homology"/>
<organism>
    <name type="scientific">Corynebacterium glutamicum (strain R)</name>
    <dbReference type="NCBI Taxonomy" id="340322"/>
    <lineage>
        <taxon>Bacteria</taxon>
        <taxon>Bacillati</taxon>
        <taxon>Actinomycetota</taxon>
        <taxon>Actinomycetes</taxon>
        <taxon>Mycobacteriales</taxon>
        <taxon>Corynebacteriaceae</taxon>
        <taxon>Corynebacterium</taxon>
    </lineage>
</organism>
<protein>
    <recommendedName>
        <fullName evidence="1">DNA integrity scanning protein DisA</fullName>
    </recommendedName>
    <alternativeName>
        <fullName evidence="1">Cyclic di-AMP synthase</fullName>
        <shortName evidence="1">c-di-AMP synthase</shortName>
    </alternativeName>
    <alternativeName>
        <fullName evidence="1">Diadenylate cyclase</fullName>
        <ecNumber evidence="1">2.7.7.85</ecNumber>
    </alternativeName>
</protein>
<name>DISA_CORGB</name>
<accession>A4QH66</accession>
<keyword id="KW-0067">ATP-binding</keyword>
<keyword id="KW-0227">DNA damage</keyword>
<keyword id="KW-0234">DNA repair</keyword>
<keyword id="KW-0238">DNA-binding</keyword>
<keyword id="KW-0460">Magnesium</keyword>
<keyword id="KW-0547">Nucleotide-binding</keyword>
<keyword id="KW-0548">Nucleotidyltransferase</keyword>
<keyword id="KW-0808">Transferase</keyword>
<comment type="function">
    <text evidence="1">Participates in a DNA-damage check-point. DisA forms globular foci that rapidly scan along the chromosomes searching for lesions.</text>
</comment>
<comment type="function">
    <text evidence="1">Also has diadenylate cyclase activity, catalyzing the condensation of 2 ATP molecules into cyclic di-AMP (c-di-AMP). c-di-AMP likely acts as a signaling molecule that may couple DNA integrity with a cellular process.</text>
</comment>
<comment type="catalytic activity">
    <reaction evidence="1">
        <text>2 ATP = 3',3'-c-di-AMP + 2 diphosphate</text>
        <dbReference type="Rhea" id="RHEA:35655"/>
        <dbReference type="ChEBI" id="CHEBI:30616"/>
        <dbReference type="ChEBI" id="CHEBI:33019"/>
        <dbReference type="ChEBI" id="CHEBI:71500"/>
        <dbReference type="EC" id="2.7.7.85"/>
    </reaction>
</comment>
<comment type="cofactor">
    <cofactor evidence="1">
        <name>Mg(2+)</name>
        <dbReference type="ChEBI" id="CHEBI:18420"/>
    </cofactor>
</comment>
<comment type="subunit">
    <text evidence="1">Homooctamer.</text>
</comment>
<comment type="similarity">
    <text evidence="1">Belongs to the DisA family.</text>
</comment>
<reference key="1">
    <citation type="journal article" date="2007" name="Microbiology">
        <title>Comparative analysis of the Corynebacterium glutamicum group and complete genome sequence of strain R.</title>
        <authorList>
            <person name="Yukawa H."/>
            <person name="Omumasaba C.A."/>
            <person name="Nonaka H."/>
            <person name="Kos P."/>
            <person name="Okai N."/>
            <person name="Suzuki N."/>
            <person name="Suda M."/>
            <person name="Tsuge Y."/>
            <person name="Watanabe J."/>
            <person name="Ikeda Y."/>
            <person name="Vertes A.A."/>
            <person name="Inui M."/>
        </authorList>
    </citation>
    <scope>NUCLEOTIDE SEQUENCE [LARGE SCALE GENOMIC DNA]</scope>
    <source>
        <strain>R</strain>
    </source>
</reference>
<gene>
    <name evidence="1" type="primary">disA</name>
    <name type="ordered locus">cgR_2570</name>
</gene>
<feature type="chain" id="PRO_1000017370" description="DNA integrity scanning protein DisA">
    <location>
        <begin position="1"/>
        <end position="366"/>
    </location>
</feature>
<feature type="domain" description="DAC" evidence="2">
    <location>
        <begin position="21"/>
        <end position="159"/>
    </location>
</feature>
<feature type="binding site" evidence="1">
    <location>
        <position position="88"/>
    </location>
    <ligand>
        <name>ATP</name>
        <dbReference type="ChEBI" id="CHEBI:30616"/>
    </ligand>
</feature>
<feature type="binding site" evidence="1">
    <location>
        <position position="106"/>
    </location>
    <ligand>
        <name>ATP</name>
        <dbReference type="ChEBI" id="CHEBI:30616"/>
    </ligand>
</feature>
<feature type="binding site" evidence="1">
    <location>
        <begin position="119"/>
        <end position="123"/>
    </location>
    <ligand>
        <name>ATP</name>
        <dbReference type="ChEBI" id="CHEBI:30616"/>
    </ligand>
</feature>
<dbReference type="EC" id="2.7.7.85" evidence="1"/>
<dbReference type="EMBL" id="AP009044">
    <property type="protein sequence ID" value="BAF55582.1"/>
    <property type="molecule type" value="Genomic_DNA"/>
</dbReference>
<dbReference type="RefSeq" id="WP_003853855.1">
    <property type="nucleotide sequence ID" value="NC_009342.1"/>
</dbReference>
<dbReference type="SMR" id="A4QH66"/>
<dbReference type="KEGG" id="cgt:cgR_2570"/>
<dbReference type="HOGENOM" id="CLU_787128_0_0_11"/>
<dbReference type="PhylomeDB" id="A4QH66"/>
<dbReference type="Proteomes" id="UP000006698">
    <property type="component" value="Chromosome"/>
</dbReference>
<dbReference type="GO" id="GO:0004016">
    <property type="term" value="F:adenylate cyclase activity"/>
    <property type="evidence" value="ECO:0007669"/>
    <property type="project" value="TreeGrafter"/>
</dbReference>
<dbReference type="GO" id="GO:0005524">
    <property type="term" value="F:ATP binding"/>
    <property type="evidence" value="ECO:0007669"/>
    <property type="project" value="UniProtKB-UniRule"/>
</dbReference>
<dbReference type="GO" id="GO:0106408">
    <property type="term" value="F:diadenylate cyclase activity"/>
    <property type="evidence" value="ECO:0007669"/>
    <property type="project" value="UniProtKB-EC"/>
</dbReference>
<dbReference type="GO" id="GO:0003677">
    <property type="term" value="F:DNA binding"/>
    <property type="evidence" value="ECO:0007669"/>
    <property type="project" value="UniProtKB-UniRule"/>
</dbReference>
<dbReference type="GO" id="GO:0006281">
    <property type="term" value="P:DNA repair"/>
    <property type="evidence" value="ECO:0007669"/>
    <property type="project" value="UniProtKB-UniRule"/>
</dbReference>
<dbReference type="Gene3D" id="1.10.150.20">
    <property type="entry name" value="5' to 3' exonuclease, C-terminal subdomain"/>
    <property type="match status" value="1"/>
</dbReference>
<dbReference type="Gene3D" id="1.20.1260.110">
    <property type="entry name" value="DNA integrity scanning linker region"/>
    <property type="match status" value="1"/>
</dbReference>
<dbReference type="Gene3D" id="3.40.1700.10">
    <property type="entry name" value="DNA integrity scanning protein, DisA, N-terminal domain"/>
    <property type="match status" value="1"/>
</dbReference>
<dbReference type="HAMAP" id="MF_01438">
    <property type="entry name" value="DisA"/>
    <property type="match status" value="1"/>
</dbReference>
<dbReference type="InterPro" id="IPR050338">
    <property type="entry name" value="DisA"/>
</dbReference>
<dbReference type="InterPro" id="IPR041663">
    <property type="entry name" value="DisA/LigA_HHH"/>
</dbReference>
<dbReference type="InterPro" id="IPR038331">
    <property type="entry name" value="DisA_sf"/>
</dbReference>
<dbReference type="InterPro" id="IPR036888">
    <property type="entry name" value="DNA_integrity_DisA_N_sf"/>
</dbReference>
<dbReference type="InterPro" id="IPR018906">
    <property type="entry name" value="DNA_integrity_scan_DisA_link"/>
</dbReference>
<dbReference type="InterPro" id="IPR003390">
    <property type="entry name" value="DNA_integrity_scan_DisA_N"/>
</dbReference>
<dbReference type="InterPro" id="IPR023763">
    <property type="entry name" value="DNA_integrity_scanning_protein"/>
</dbReference>
<dbReference type="InterPro" id="IPR010994">
    <property type="entry name" value="RuvA_2-like"/>
</dbReference>
<dbReference type="NCBIfam" id="NF010009">
    <property type="entry name" value="PRK13482.1"/>
    <property type="match status" value="1"/>
</dbReference>
<dbReference type="PANTHER" id="PTHR34185">
    <property type="entry name" value="DIADENYLATE CYCLASE"/>
    <property type="match status" value="1"/>
</dbReference>
<dbReference type="PANTHER" id="PTHR34185:SF3">
    <property type="entry name" value="DNA INTEGRITY SCANNING PROTEIN DISA"/>
    <property type="match status" value="1"/>
</dbReference>
<dbReference type="Pfam" id="PF02457">
    <property type="entry name" value="DAC"/>
    <property type="match status" value="1"/>
</dbReference>
<dbReference type="Pfam" id="PF10635">
    <property type="entry name" value="DisA-linker"/>
    <property type="match status" value="1"/>
</dbReference>
<dbReference type="Pfam" id="PF12826">
    <property type="entry name" value="HHH_2"/>
    <property type="match status" value="1"/>
</dbReference>
<dbReference type="SUPFAM" id="SSF47781">
    <property type="entry name" value="RuvA domain 2-like"/>
    <property type="match status" value="1"/>
</dbReference>
<dbReference type="SUPFAM" id="SSF143597">
    <property type="entry name" value="YojJ-like"/>
    <property type="match status" value="1"/>
</dbReference>
<dbReference type="PROSITE" id="PS51794">
    <property type="entry name" value="DAC"/>
    <property type="match status" value="1"/>
</dbReference>
<evidence type="ECO:0000255" key="1">
    <source>
        <dbReference type="HAMAP-Rule" id="MF_01438"/>
    </source>
</evidence>
<evidence type="ECO:0000255" key="2">
    <source>
        <dbReference type="PROSITE-ProRule" id="PRU01130"/>
    </source>
</evidence>